<gene>
    <name type="primary">rps4</name>
</gene>
<dbReference type="EMBL" id="AP009366">
    <property type="protein sequence ID" value="BAF49772.1"/>
    <property type="molecule type" value="Genomic_DNA"/>
</dbReference>
<dbReference type="RefSeq" id="YP_001122948.1">
    <property type="nucleotide sequence ID" value="NC_009265.1"/>
</dbReference>
<dbReference type="SMR" id="A4QJB7"/>
<dbReference type="GeneID" id="4968646"/>
<dbReference type="GO" id="GO:0009507">
    <property type="term" value="C:chloroplast"/>
    <property type="evidence" value="ECO:0007669"/>
    <property type="project" value="UniProtKB-SubCell"/>
</dbReference>
<dbReference type="GO" id="GO:0015935">
    <property type="term" value="C:small ribosomal subunit"/>
    <property type="evidence" value="ECO:0007669"/>
    <property type="project" value="InterPro"/>
</dbReference>
<dbReference type="GO" id="GO:0019843">
    <property type="term" value="F:rRNA binding"/>
    <property type="evidence" value="ECO:0007669"/>
    <property type="project" value="UniProtKB-UniRule"/>
</dbReference>
<dbReference type="GO" id="GO:0003735">
    <property type="term" value="F:structural constituent of ribosome"/>
    <property type="evidence" value="ECO:0007669"/>
    <property type="project" value="InterPro"/>
</dbReference>
<dbReference type="GO" id="GO:0042274">
    <property type="term" value="P:ribosomal small subunit biogenesis"/>
    <property type="evidence" value="ECO:0007669"/>
    <property type="project" value="TreeGrafter"/>
</dbReference>
<dbReference type="GO" id="GO:0006412">
    <property type="term" value="P:translation"/>
    <property type="evidence" value="ECO:0007669"/>
    <property type="project" value="UniProtKB-UniRule"/>
</dbReference>
<dbReference type="CDD" id="cd00165">
    <property type="entry name" value="S4"/>
    <property type="match status" value="1"/>
</dbReference>
<dbReference type="FunFam" id="1.10.1050.10:FF:000002">
    <property type="entry name" value="30S ribosomal protein S4, chloroplastic"/>
    <property type="match status" value="1"/>
</dbReference>
<dbReference type="FunFam" id="3.10.290.10:FF:000081">
    <property type="entry name" value="30S ribosomal protein S4, chloroplastic"/>
    <property type="match status" value="1"/>
</dbReference>
<dbReference type="Gene3D" id="1.10.1050.10">
    <property type="entry name" value="Ribosomal Protein S4 Delta 41, Chain A, domain 1"/>
    <property type="match status" value="1"/>
</dbReference>
<dbReference type="Gene3D" id="3.10.290.10">
    <property type="entry name" value="RNA-binding S4 domain"/>
    <property type="match status" value="1"/>
</dbReference>
<dbReference type="HAMAP" id="MF_01306_B">
    <property type="entry name" value="Ribosomal_uS4_B"/>
    <property type="match status" value="1"/>
</dbReference>
<dbReference type="InterPro" id="IPR022801">
    <property type="entry name" value="Ribosomal_uS4"/>
</dbReference>
<dbReference type="InterPro" id="IPR005709">
    <property type="entry name" value="Ribosomal_uS4_bac-type"/>
</dbReference>
<dbReference type="InterPro" id="IPR018079">
    <property type="entry name" value="Ribosomal_uS4_CS"/>
</dbReference>
<dbReference type="InterPro" id="IPR001912">
    <property type="entry name" value="Ribosomal_uS4_N"/>
</dbReference>
<dbReference type="InterPro" id="IPR002942">
    <property type="entry name" value="S4_RNA-bd"/>
</dbReference>
<dbReference type="InterPro" id="IPR036986">
    <property type="entry name" value="S4_RNA-bd_sf"/>
</dbReference>
<dbReference type="NCBIfam" id="NF003717">
    <property type="entry name" value="PRK05327.1"/>
    <property type="match status" value="1"/>
</dbReference>
<dbReference type="NCBIfam" id="TIGR01017">
    <property type="entry name" value="rpsD_bact"/>
    <property type="match status" value="1"/>
</dbReference>
<dbReference type="PANTHER" id="PTHR11831">
    <property type="entry name" value="30S 40S RIBOSOMAL PROTEIN"/>
    <property type="match status" value="1"/>
</dbReference>
<dbReference type="PANTHER" id="PTHR11831:SF4">
    <property type="entry name" value="SMALL RIBOSOMAL SUBUNIT PROTEIN US4M"/>
    <property type="match status" value="1"/>
</dbReference>
<dbReference type="Pfam" id="PF00163">
    <property type="entry name" value="Ribosomal_S4"/>
    <property type="match status" value="1"/>
</dbReference>
<dbReference type="Pfam" id="PF01479">
    <property type="entry name" value="S4"/>
    <property type="match status" value="1"/>
</dbReference>
<dbReference type="SMART" id="SM01390">
    <property type="entry name" value="Ribosomal_S4"/>
    <property type="match status" value="1"/>
</dbReference>
<dbReference type="SMART" id="SM00363">
    <property type="entry name" value="S4"/>
    <property type="match status" value="1"/>
</dbReference>
<dbReference type="SUPFAM" id="SSF55174">
    <property type="entry name" value="Alpha-L RNA-binding motif"/>
    <property type="match status" value="1"/>
</dbReference>
<dbReference type="PROSITE" id="PS00632">
    <property type="entry name" value="RIBOSOMAL_S4"/>
    <property type="match status" value="1"/>
</dbReference>
<dbReference type="PROSITE" id="PS50889">
    <property type="entry name" value="S4"/>
    <property type="match status" value="1"/>
</dbReference>
<name>RR4_AETCO</name>
<sequence length="201" mass="23259">MSRYRGPRFKKIRRLGALPGLTSKRPRAGSDLRNQSRSGKKSQYRIRLEEKQKLRFHYGLTERQLLKYVRIAGKAKGSTGQVLLQLLEMRLDNILFRLGMALTIPQARQLVNHGHILVNGRIVDIPSYRCKPRDIITVKDEQNSRTLVQNLLDSSAPEELPKHLTLHTFQYEGLVNQIIDRKCVGLKINELLVVEYYSRQT</sequence>
<protein>
    <recommendedName>
        <fullName evidence="3">Small ribosomal subunit protein uS4c</fullName>
    </recommendedName>
    <alternativeName>
        <fullName>30S ribosomal protein S4, chloroplastic</fullName>
    </alternativeName>
</protein>
<evidence type="ECO:0000250" key="1"/>
<evidence type="ECO:0000256" key="2">
    <source>
        <dbReference type="SAM" id="MobiDB-lite"/>
    </source>
</evidence>
<evidence type="ECO:0000305" key="3"/>
<reference key="1">
    <citation type="submission" date="2007-03" db="EMBL/GenBank/DDBJ databases">
        <title>Sequencing analysis of Aethionema coridifolium chloroplast DNA.</title>
        <authorList>
            <person name="Hosouchi T."/>
            <person name="Tsuruoka H."/>
            <person name="Kotani H."/>
        </authorList>
    </citation>
    <scope>NUCLEOTIDE SEQUENCE [LARGE SCALE GENOMIC DNA]</scope>
</reference>
<geneLocation type="chloroplast"/>
<keyword id="KW-0150">Chloroplast</keyword>
<keyword id="KW-0934">Plastid</keyword>
<keyword id="KW-0687">Ribonucleoprotein</keyword>
<keyword id="KW-0689">Ribosomal protein</keyword>
<keyword id="KW-0694">RNA-binding</keyword>
<keyword id="KW-0699">rRNA-binding</keyword>
<organism>
    <name type="scientific">Aethionema cordifolium</name>
    <name type="common">Lebanon stonecress</name>
    <dbReference type="NCBI Taxonomy" id="434059"/>
    <lineage>
        <taxon>Eukaryota</taxon>
        <taxon>Viridiplantae</taxon>
        <taxon>Streptophyta</taxon>
        <taxon>Embryophyta</taxon>
        <taxon>Tracheophyta</taxon>
        <taxon>Spermatophyta</taxon>
        <taxon>Magnoliopsida</taxon>
        <taxon>eudicotyledons</taxon>
        <taxon>Gunneridae</taxon>
        <taxon>Pentapetalae</taxon>
        <taxon>rosids</taxon>
        <taxon>malvids</taxon>
        <taxon>Brassicales</taxon>
        <taxon>Brassicaceae</taxon>
        <taxon>Aethionemeae</taxon>
        <taxon>Aethionema</taxon>
    </lineage>
</organism>
<comment type="function">
    <text evidence="1">One of the primary rRNA binding proteins, it binds directly to 16S rRNA where it nucleates assembly of the body of the 30S subunit.</text>
</comment>
<comment type="function">
    <text evidence="1">With S5 and S12 plays an important role in translational accuracy.</text>
</comment>
<comment type="subunit">
    <text evidence="1">Part of the 30S ribosomal subunit. Contacts protein S5. The interaction surface between S4 and S5 is involved in control of translational fidelity (By similarity).</text>
</comment>
<comment type="subcellular location">
    <subcellularLocation>
        <location>Plastid</location>
        <location>Chloroplast</location>
    </subcellularLocation>
</comment>
<comment type="similarity">
    <text evidence="3">Belongs to the universal ribosomal protein uS4 family.</text>
</comment>
<accession>A4QJB7</accession>
<feature type="chain" id="PRO_0000293416" description="Small ribosomal subunit protein uS4c">
    <location>
        <begin position="1"/>
        <end position="201"/>
    </location>
</feature>
<feature type="domain" description="S4 RNA-binding">
    <location>
        <begin position="89"/>
        <end position="152"/>
    </location>
</feature>
<feature type="region of interest" description="Disordered" evidence="2">
    <location>
        <begin position="20"/>
        <end position="44"/>
    </location>
</feature>
<proteinExistence type="inferred from homology"/>